<organism>
    <name type="scientific">Bacillus cereus (strain ZK / E33L)</name>
    <dbReference type="NCBI Taxonomy" id="288681"/>
    <lineage>
        <taxon>Bacteria</taxon>
        <taxon>Bacillati</taxon>
        <taxon>Bacillota</taxon>
        <taxon>Bacilli</taxon>
        <taxon>Bacillales</taxon>
        <taxon>Bacillaceae</taxon>
        <taxon>Bacillus</taxon>
        <taxon>Bacillus cereus group</taxon>
    </lineage>
</organism>
<feature type="chain" id="PRO_0000136099" description="Histidine--tRNA ligase 1">
    <location>
        <begin position="1"/>
        <end position="425"/>
    </location>
</feature>
<protein>
    <recommendedName>
        <fullName evidence="1">Histidine--tRNA ligase 1</fullName>
        <ecNumber evidence="1">6.1.1.21</ecNumber>
    </recommendedName>
    <alternativeName>
        <fullName evidence="1">Histidyl-tRNA synthetase 1</fullName>
        <shortName evidence="1">HisRS 1</shortName>
    </alternativeName>
</protein>
<gene>
    <name evidence="1" type="primary">hisS1</name>
    <name type="ordered locus">BCE33L3024</name>
</gene>
<sequence>MEMKNVKGTKDYLPEEQVLRNKIKRACEDTFERYGCKSLETPTLNMYELMSYKYGGGDEILKEIYTLRDQGKRELALRYDLTIPFAKVVAMNPNIRLPFKRYEIGKVFRDGPIKQGRFREFIQCDVDIVGVESVMAEAELMSMAFELFRTLNLEVTIQYNNRKLLNGILESINIPTERTSDVILSLDKIEKIGIDGVRKDVLERGISEEMADTICNTVLSCLKLSIDDFKDAFNTPLVAEGVNELQQLQQYLIALGINENAIFNPFLARGLTMYTGTVYEIFLKDGSITSSIGSGGRYDNIIGAFRGDNMNYPTVGISFGLDVIYTALSQKETISSTADIFIIPIGTELQCLQIAQQLRSTTSLKVELELTGRKLKRALNYANKENIPYVLIIGEEELSTETAMLRNMKEGSEVKVPLSSLSNYL</sequence>
<evidence type="ECO:0000255" key="1">
    <source>
        <dbReference type="HAMAP-Rule" id="MF_00127"/>
    </source>
</evidence>
<reference key="1">
    <citation type="journal article" date="2006" name="J. Bacteriol.">
        <title>Pathogenomic sequence analysis of Bacillus cereus and Bacillus thuringiensis isolates closely related to Bacillus anthracis.</title>
        <authorList>
            <person name="Han C.S."/>
            <person name="Xie G."/>
            <person name="Challacombe J.F."/>
            <person name="Altherr M.R."/>
            <person name="Bhotika S.S."/>
            <person name="Bruce D."/>
            <person name="Campbell C.S."/>
            <person name="Campbell M.L."/>
            <person name="Chen J."/>
            <person name="Chertkov O."/>
            <person name="Cleland C."/>
            <person name="Dimitrijevic M."/>
            <person name="Doggett N.A."/>
            <person name="Fawcett J.J."/>
            <person name="Glavina T."/>
            <person name="Goodwin L.A."/>
            <person name="Hill K.K."/>
            <person name="Hitchcock P."/>
            <person name="Jackson P.J."/>
            <person name="Keim P."/>
            <person name="Kewalramani A.R."/>
            <person name="Longmire J."/>
            <person name="Lucas S."/>
            <person name="Malfatti S."/>
            <person name="McMurry K."/>
            <person name="Meincke L.J."/>
            <person name="Misra M."/>
            <person name="Moseman B.L."/>
            <person name="Mundt M."/>
            <person name="Munk A.C."/>
            <person name="Okinaka R.T."/>
            <person name="Parson-Quintana B."/>
            <person name="Reilly L.P."/>
            <person name="Richardson P."/>
            <person name="Robinson D.L."/>
            <person name="Rubin E."/>
            <person name="Saunders E."/>
            <person name="Tapia R."/>
            <person name="Tesmer J.G."/>
            <person name="Thayer N."/>
            <person name="Thompson L.S."/>
            <person name="Tice H."/>
            <person name="Ticknor L.O."/>
            <person name="Wills P.L."/>
            <person name="Brettin T.S."/>
            <person name="Gilna P."/>
        </authorList>
    </citation>
    <scope>NUCLEOTIDE SEQUENCE [LARGE SCALE GENOMIC DNA]</scope>
    <source>
        <strain>ZK / E33L</strain>
    </source>
</reference>
<accession>Q638Q6</accession>
<proteinExistence type="inferred from homology"/>
<dbReference type="EC" id="6.1.1.21" evidence="1"/>
<dbReference type="EMBL" id="CP000001">
    <property type="protein sequence ID" value="AAU17237.1"/>
    <property type="molecule type" value="Genomic_DNA"/>
</dbReference>
<dbReference type="RefSeq" id="WP_000425328.1">
    <property type="nucleotide sequence ID" value="NC_006274.1"/>
</dbReference>
<dbReference type="SMR" id="Q638Q6"/>
<dbReference type="KEGG" id="bcz:BCE33L3024"/>
<dbReference type="PATRIC" id="fig|288681.22.peg.2421"/>
<dbReference type="Proteomes" id="UP000002612">
    <property type="component" value="Chromosome"/>
</dbReference>
<dbReference type="GO" id="GO:0005737">
    <property type="term" value="C:cytoplasm"/>
    <property type="evidence" value="ECO:0007669"/>
    <property type="project" value="UniProtKB-SubCell"/>
</dbReference>
<dbReference type="GO" id="GO:0005524">
    <property type="term" value="F:ATP binding"/>
    <property type="evidence" value="ECO:0007669"/>
    <property type="project" value="UniProtKB-UniRule"/>
</dbReference>
<dbReference type="GO" id="GO:0140096">
    <property type="term" value="F:catalytic activity, acting on a protein"/>
    <property type="evidence" value="ECO:0007669"/>
    <property type="project" value="UniProtKB-ARBA"/>
</dbReference>
<dbReference type="GO" id="GO:0004821">
    <property type="term" value="F:histidine-tRNA ligase activity"/>
    <property type="evidence" value="ECO:0007669"/>
    <property type="project" value="UniProtKB-UniRule"/>
</dbReference>
<dbReference type="GO" id="GO:0016740">
    <property type="term" value="F:transferase activity"/>
    <property type="evidence" value="ECO:0007669"/>
    <property type="project" value="UniProtKB-ARBA"/>
</dbReference>
<dbReference type="GO" id="GO:0006427">
    <property type="term" value="P:histidyl-tRNA aminoacylation"/>
    <property type="evidence" value="ECO:0007669"/>
    <property type="project" value="UniProtKB-UniRule"/>
</dbReference>
<dbReference type="CDD" id="cd00773">
    <property type="entry name" value="HisRS-like_core"/>
    <property type="match status" value="1"/>
</dbReference>
<dbReference type="FunFam" id="3.40.50.800:FF:000033">
    <property type="entry name" value="Histidine--tRNA ligase"/>
    <property type="match status" value="1"/>
</dbReference>
<dbReference type="Gene3D" id="3.40.50.800">
    <property type="entry name" value="Anticodon-binding domain"/>
    <property type="match status" value="1"/>
</dbReference>
<dbReference type="Gene3D" id="3.30.930.10">
    <property type="entry name" value="Bira Bifunctional Protein, Domain 2"/>
    <property type="match status" value="1"/>
</dbReference>
<dbReference type="HAMAP" id="MF_00127">
    <property type="entry name" value="His_tRNA_synth"/>
    <property type="match status" value="1"/>
</dbReference>
<dbReference type="InterPro" id="IPR006195">
    <property type="entry name" value="aa-tRNA-synth_II"/>
</dbReference>
<dbReference type="InterPro" id="IPR045864">
    <property type="entry name" value="aa-tRNA-synth_II/BPL/LPL"/>
</dbReference>
<dbReference type="InterPro" id="IPR004154">
    <property type="entry name" value="Anticodon-bd"/>
</dbReference>
<dbReference type="InterPro" id="IPR036621">
    <property type="entry name" value="Anticodon-bd_dom_sf"/>
</dbReference>
<dbReference type="InterPro" id="IPR015807">
    <property type="entry name" value="His-tRNA-ligase"/>
</dbReference>
<dbReference type="InterPro" id="IPR041715">
    <property type="entry name" value="HisRS-like_core"/>
</dbReference>
<dbReference type="InterPro" id="IPR004516">
    <property type="entry name" value="HisRS/HisZ"/>
</dbReference>
<dbReference type="NCBIfam" id="TIGR00442">
    <property type="entry name" value="hisS"/>
    <property type="match status" value="1"/>
</dbReference>
<dbReference type="NCBIfam" id="NF009085">
    <property type="entry name" value="PRK12420.1"/>
    <property type="match status" value="1"/>
</dbReference>
<dbReference type="PANTHER" id="PTHR11476:SF7">
    <property type="entry name" value="HISTIDINE--TRNA LIGASE"/>
    <property type="match status" value="1"/>
</dbReference>
<dbReference type="PANTHER" id="PTHR11476">
    <property type="entry name" value="HISTIDYL-TRNA SYNTHETASE"/>
    <property type="match status" value="1"/>
</dbReference>
<dbReference type="Pfam" id="PF03129">
    <property type="entry name" value="HGTP_anticodon"/>
    <property type="match status" value="1"/>
</dbReference>
<dbReference type="Pfam" id="PF13393">
    <property type="entry name" value="tRNA-synt_His"/>
    <property type="match status" value="1"/>
</dbReference>
<dbReference type="PIRSF" id="PIRSF001549">
    <property type="entry name" value="His-tRNA_synth"/>
    <property type="match status" value="1"/>
</dbReference>
<dbReference type="SUPFAM" id="SSF52954">
    <property type="entry name" value="Class II aaRS ABD-related"/>
    <property type="match status" value="1"/>
</dbReference>
<dbReference type="SUPFAM" id="SSF55681">
    <property type="entry name" value="Class II aaRS and biotin synthetases"/>
    <property type="match status" value="1"/>
</dbReference>
<dbReference type="PROSITE" id="PS50862">
    <property type="entry name" value="AA_TRNA_LIGASE_II"/>
    <property type="match status" value="1"/>
</dbReference>
<name>SYH1_BACCZ</name>
<comment type="catalytic activity">
    <reaction evidence="1">
        <text>tRNA(His) + L-histidine + ATP = L-histidyl-tRNA(His) + AMP + diphosphate + H(+)</text>
        <dbReference type="Rhea" id="RHEA:17313"/>
        <dbReference type="Rhea" id="RHEA-COMP:9665"/>
        <dbReference type="Rhea" id="RHEA-COMP:9689"/>
        <dbReference type="ChEBI" id="CHEBI:15378"/>
        <dbReference type="ChEBI" id="CHEBI:30616"/>
        <dbReference type="ChEBI" id="CHEBI:33019"/>
        <dbReference type="ChEBI" id="CHEBI:57595"/>
        <dbReference type="ChEBI" id="CHEBI:78442"/>
        <dbReference type="ChEBI" id="CHEBI:78527"/>
        <dbReference type="ChEBI" id="CHEBI:456215"/>
        <dbReference type="EC" id="6.1.1.21"/>
    </reaction>
</comment>
<comment type="subunit">
    <text evidence="1">Homodimer.</text>
</comment>
<comment type="subcellular location">
    <subcellularLocation>
        <location evidence="1">Cytoplasm</location>
    </subcellularLocation>
</comment>
<comment type="similarity">
    <text evidence="1">Belongs to the class-II aminoacyl-tRNA synthetase family.</text>
</comment>
<keyword id="KW-0030">Aminoacyl-tRNA synthetase</keyword>
<keyword id="KW-0067">ATP-binding</keyword>
<keyword id="KW-0963">Cytoplasm</keyword>
<keyword id="KW-0436">Ligase</keyword>
<keyword id="KW-0547">Nucleotide-binding</keyword>
<keyword id="KW-0648">Protein biosynthesis</keyword>